<accession>A7GH02</accession>
<keyword id="KW-0067">ATP-binding</keyword>
<keyword id="KW-0319">Glycerol metabolism</keyword>
<keyword id="KW-0418">Kinase</keyword>
<keyword id="KW-0547">Nucleotide-binding</keyword>
<keyword id="KW-0808">Transferase</keyword>
<name>GLPK_CLOBL</name>
<organism>
    <name type="scientific">Clostridium botulinum (strain Langeland / NCTC 10281 / Type F)</name>
    <dbReference type="NCBI Taxonomy" id="441772"/>
    <lineage>
        <taxon>Bacteria</taxon>
        <taxon>Bacillati</taxon>
        <taxon>Bacillota</taxon>
        <taxon>Clostridia</taxon>
        <taxon>Eubacteriales</taxon>
        <taxon>Clostridiaceae</taxon>
        <taxon>Clostridium</taxon>
    </lineage>
</organism>
<feature type="chain" id="PRO_1000020721" description="Glycerol kinase">
    <location>
        <begin position="1"/>
        <end position="498"/>
    </location>
</feature>
<feature type="binding site" evidence="1">
    <location>
        <position position="12"/>
    </location>
    <ligand>
        <name>ADP</name>
        <dbReference type="ChEBI" id="CHEBI:456216"/>
    </ligand>
</feature>
<feature type="binding site" evidence="1">
    <location>
        <position position="12"/>
    </location>
    <ligand>
        <name>ATP</name>
        <dbReference type="ChEBI" id="CHEBI:30616"/>
    </ligand>
</feature>
<feature type="binding site" evidence="1">
    <location>
        <position position="12"/>
    </location>
    <ligand>
        <name>sn-glycerol 3-phosphate</name>
        <dbReference type="ChEBI" id="CHEBI:57597"/>
    </ligand>
</feature>
<feature type="binding site" evidence="1">
    <location>
        <position position="13"/>
    </location>
    <ligand>
        <name>ATP</name>
        <dbReference type="ChEBI" id="CHEBI:30616"/>
    </ligand>
</feature>
<feature type="binding site" evidence="1">
    <location>
        <position position="14"/>
    </location>
    <ligand>
        <name>ATP</name>
        <dbReference type="ChEBI" id="CHEBI:30616"/>
    </ligand>
</feature>
<feature type="binding site" evidence="1">
    <location>
        <position position="16"/>
    </location>
    <ligand>
        <name>ADP</name>
        <dbReference type="ChEBI" id="CHEBI:456216"/>
    </ligand>
</feature>
<feature type="binding site" evidence="1">
    <location>
        <position position="82"/>
    </location>
    <ligand>
        <name>glycerol</name>
        <dbReference type="ChEBI" id="CHEBI:17754"/>
    </ligand>
</feature>
<feature type="binding site" evidence="1">
    <location>
        <position position="82"/>
    </location>
    <ligand>
        <name>sn-glycerol 3-phosphate</name>
        <dbReference type="ChEBI" id="CHEBI:57597"/>
    </ligand>
</feature>
<feature type="binding site" evidence="1">
    <location>
        <position position="83"/>
    </location>
    <ligand>
        <name>glycerol</name>
        <dbReference type="ChEBI" id="CHEBI:17754"/>
    </ligand>
</feature>
<feature type="binding site" evidence="1">
    <location>
        <position position="83"/>
    </location>
    <ligand>
        <name>sn-glycerol 3-phosphate</name>
        <dbReference type="ChEBI" id="CHEBI:57597"/>
    </ligand>
</feature>
<feature type="binding site" evidence="1">
    <location>
        <position position="134"/>
    </location>
    <ligand>
        <name>glycerol</name>
        <dbReference type="ChEBI" id="CHEBI:17754"/>
    </ligand>
</feature>
<feature type="binding site" evidence="1">
    <location>
        <position position="134"/>
    </location>
    <ligand>
        <name>sn-glycerol 3-phosphate</name>
        <dbReference type="ChEBI" id="CHEBI:57597"/>
    </ligand>
</feature>
<feature type="binding site" evidence="1">
    <location>
        <position position="243"/>
    </location>
    <ligand>
        <name>glycerol</name>
        <dbReference type="ChEBI" id="CHEBI:17754"/>
    </ligand>
</feature>
<feature type="binding site" evidence="1">
    <location>
        <position position="243"/>
    </location>
    <ligand>
        <name>sn-glycerol 3-phosphate</name>
        <dbReference type="ChEBI" id="CHEBI:57597"/>
    </ligand>
</feature>
<feature type="binding site" evidence="1">
    <location>
        <position position="244"/>
    </location>
    <ligand>
        <name>glycerol</name>
        <dbReference type="ChEBI" id="CHEBI:17754"/>
    </ligand>
</feature>
<feature type="binding site" evidence="1">
    <location>
        <position position="265"/>
    </location>
    <ligand>
        <name>ADP</name>
        <dbReference type="ChEBI" id="CHEBI:456216"/>
    </ligand>
</feature>
<feature type="binding site" evidence="1">
    <location>
        <position position="265"/>
    </location>
    <ligand>
        <name>ATP</name>
        <dbReference type="ChEBI" id="CHEBI:30616"/>
    </ligand>
</feature>
<feature type="binding site" evidence="1">
    <location>
        <position position="308"/>
    </location>
    <ligand>
        <name>ADP</name>
        <dbReference type="ChEBI" id="CHEBI:456216"/>
    </ligand>
</feature>
<feature type="binding site" evidence="1">
    <location>
        <position position="308"/>
    </location>
    <ligand>
        <name>ATP</name>
        <dbReference type="ChEBI" id="CHEBI:30616"/>
    </ligand>
</feature>
<feature type="binding site" evidence="1">
    <location>
        <position position="312"/>
    </location>
    <ligand>
        <name>ATP</name>
        <dbReference type="ChEBI" id="CHEBI:30616"/>
    </ligand>
</feature>
<feature type="binding site" evidence="1">
    <location>
        <position position="409"/>
    </location>
    <ligand>
        <name>ADP</name>
        <dbReference type="ChEBI" id="CHEBI:456216"/>
    </ligand>
</feature>
<feature type="binding site" evidence="1">
    <location>
        <position position="409"/>
    </location>
    <ligand>
        <name>ATP</name>
        <dbReference type="ChEBI" id="CHEBI:30616"/>
    </ligand>
</feature>
<feature type="binding site" evidence="1">
    <location>
        <position position="413"/>
    </location>
    <ligand>
        <name>ADP</name>
        <dbReference type="ChEBI" id="CHEBI:456216"/>
    </ligand>
</feature>
<gene>
    <name evidence="1" type="primary">glpK</name>
    <name type="ordered locus">CLI_2834</name>
</gene>
<comment type="function">
    <text evidence="1">Key enzyme in the regulation of glycerol uptake and metabolism. Catalyzes the phosphorylation of glycerol to yield sn-glycerol 3-phosphate.</text>
</comment>
<comment type="catalytic activity">
    <reaction evidence="1">
        <text>glycerol + ATP = sn-glycerol 3-phosphate + ADP + H(+)</text>
        <dbReference type="Rhea" id="RHEA:21644"/>
        <dbReference type="ChEBI" id="CHEBI:15378"/>
        <dbReference type="ChEBI" id="CHEBI:17754"/>
        <dbReference type="ChEBI" id="CHEBI:30616"/>
        <dbReference type="ChEBI" id="CHEBI:57597"/>
        <dbReference type="ChEBI" id="CHEBI:456216"/>
        <dbReference type="EC" id="2.7.1.30"/>
    </reaction>
</comment>
<comment type="activity regulation">
    <text evidence="1">Activated by phosphorylation and inhibited by fructose 1,6-bisphosphate (FBP).</text>
</comment>
<comment type="pathway">
    <text evidence="1">Polyol metabolism; glycerol degradation via glycerol kinase pathway; sn-glycerol 3-phosphate from glycerol: step 1/1.</text>
</comment>
<comment type="subunit">
    <text evidence="1">Homotetramer and homodimer (in equilibrium).</text>
</comment>
<comment type="similarity">
    <text evidence="1">Belongs to the FGGY kinase family.</text>
</comment>
<protein>
    <recommendedName>
        <fullName evidence="1">Glycerol kinase</fullName>
        <ecNumber evidence="1">2.7.1.30</ecNumber>
    </recommendedName>
    <alternativeName>
        <fullName evidence="1">ATP:glycerol 3-phosphotransferase</fullName>
    </alternativeName>
    <alternativeName>
        <fullName evidence="1">Glycerokinase</fullName>
        <shortName evidence="1">GK</shortName>
    </alternativeName>
</protein>
<reference key="1">
    <citation type="submission" date="2007-06" db="EMBL/GenBank/DDBJ databases">
        <authorList>
            <person name="Brinkac L.M."/>
            <person name="Daugherty S."/>
            <person name="Dodson R.J."/>
            <person name="Madupu R."/>
            <person name="Brown J.L."/>
            <person name="Bruce D."/>
            <person name="Detter C."/>
            <person name="Munk C."/>
            <person name="Smith L.A."/>
            <person name="Smith T.J."/>
            <person name="White O."/>
            <person name="Brettin T.S."/>
        </authorList>
    </citation>
    <scope>NUCLEOTIDE SEQUENCE [LARGE SCALE GENOMIC DNA]</scope>
    <source>
        <strain>Langeland / NCTC 10281 / Type F</strain>
    </source>
</reference>
<dbReference type="EC" id="2.7.1.30" evidence="1"/>
<dbReference type="EMBL" id="CP000728">
    <property type="protein sequence ID" value="ABS42672.1"/>
    <property type="molecule type" value="Genomic_DNA"/>
</dbReference>
<dbReference type="RefSeq" id="WP_012100593.1">
    <property type="nucleotide sequence ID" value="NC_009699.1"/>
</dbReference>
<dbReference type="SMR" id="A7GH02"/>
<dbReference type="KEGG" id="cbf:CLI_2834"/>
<dbReference type="HOGENOM" id="CLU_009281_2_3_9"/>
<dbReference type="UniPathway" id="UPA00618">
    <property type="reaction ID" value="UER00672"/>
</dbReference>
<dbReference type="Proteomes" id="UP000002410">
    <property type="component" value="Chromosome"/>
</dbReference>
<dbReference type="GO" id="GO:0005829">
    <property type="term" value="C:cytosol"/>
    <property type="evidence" value="ECO:0007669"/>
    <property type="project" value="TreeGrafter"/>
</dbReference>
<dbReference type="GO" id="GO:0005524">
    <property type="term" value="F:ATP binding"/>
    <property type="evidence" value="ECO:0007669"/>
    <property type="project" value="UniProtKB-UniRule"/>
</dbReference>
<dbReference type="GO" id="GO:0004370">
    <property type="term" value="F:glycerol kinase activity"/>
    <property type="evidence" value="ECO:0000250"/>
    <property type="project" value="UniProtKB"/>
</dbReference>
<dbReference type="GO" id="GO:0019563">
    <property type="term" value="P:glycerol catabolic process"/>
    <property type="evidence" value="ECO:0007669"/>
    <property type="project" value="UniProtKB-UniRule"/>
</dbReference>
<dbReference type="GO" id="GO:0006071">
    <property type="term" value="P:glycerol metabolic process"/>
    <property type="evidence" value="ECO:0000250"/>
    <property type="project" value="UniProtKB"/>
</dbReference>
<dbReference type="GO" id="GO:0006072">
    <property type="term" value="P:glycerol-3-phosphate metabolic process"/>
    <property type="evidence" value="ECO:0007669"/>
    <property type="project" value="InterPro"/>
</dbReference>
<dbReference type="CDD" id="cd07786">
    <property type="entry name" value="FGGY_EcGK_like"/>
    <property type="match status" value="1"/>
</dbReference>
<dbReference type="FunFam" id="3.30.420.40:FF:000007">
    <property type="entry name" value="Glycerol kinase"/>
    <property type="match status" value="1"/>
</dbReference>
<dbReference type="FunFam" id="3.30.420.40:FF:000008">
    <property type="entry name" value="Glycerol kinase"/>
    <property type="match status" value="1"/>
</dbReference>
<dbReference type="Gene3D" id="3.30.420.40">
    <property type="match status" value="2"/>
</dbReference>
<dbReference type="HAMAP" id="MF_00186">
    <property type="entry name" value="Glycerol_kin"/>
    <property type="match status" value="1"/>
</dbReference>
<dbReference type="InterPro" id="IPR043129">
    <property type="entry name" value="ATPase_NBD"/>
</dbReference>
<dbReference type="InterPro" id="IPR000577">
    <property type="entry name" value="Carb_kinase_FGGY"/>
</dbReference>
<dbReference type="InterPro" id="IPR018483">
    <property type="entry name" value="Carb_kinase_FGGY_CS"/>
</dbReference>
<dbReference type="InterPro" id="IPR018485">
    <property type="entry name" value="FGGY_C"/>
</dbReference>
<dbReference type="InterPro" id="IPR018484">
    <property type="entry name" value="FGGY_N"/>
</dbReference>
<dbReference type="InterPro" id="IPR005999">
    <property type="entry name" value="Glycerol_kin"/>
</dbReference>
<dbReference type="NCBIfam" id="TIGR01311">
    <property type="entry name" value="glycerol_kin"/>
    <property type="match status" value="1"/>
</dbReference>
<dbReference type="NCBIfam" id="NF000756">
    <property type="entry name" value="PRK00047.1"/>
    <property type="match status" value="1"/>
</dbReference>
<dbReference type="PANTHER" id="PTHR10196:SF69">
    <property type="entry name" value="GLYCEROL KINASE"/>
    <property type="match status" value="1"/>
</dbReference>
<dbReference type="PANTHER" id="PTHR10196">
    <property type="entry name" value="SUGAR KINASE"/>
    <property type="match status" value="1"/>
</dbReference>
<dbReference type="Pfam" id="PF02782">
    <property type="entry name" value="FGGY_C"/>
    <property type="match status" value="1"/>
</dbReference>
<dbReference type="Pfam" id="PF00370">
    <property type="entry name" value="FGGY_N"/>
    <property type="match status" value="1"/>
</dbReference>
<dbReference type="PIRSF" id="PIRSF000538">
    <property type="entry name" value="GlpK"/>
    <property type="match status" value="1"/>
</dbReference>
<dbReference type="SUPFAM" id="SSF53067">
    <property type="entry name" value="Actin-like ATPase domain"/>
    <property type="match status" value="2"/>
</dbReference>
<dbReference type="PROSITE" id="PS00933">
    <property type="entry name" value="FGGY_KINASES_1"/>
    <property type="match status" value="1"/>
</dbReference>
<dbReference type="PROSITE" id="PS00445">
    <property type="entry name" value="FGGY_KINASES_2"/>
    <property type="match status" value="1"/>
</dbReference>
<sequence length="498" mass="55365">MEKYIMSLDQGTTSSRCIIFNKKGEVVSVAQKEFTQIYPKAGWVEHDPLEIWGKQAGVAGEALNIARISPEQIAGIGITNQRETTVVWNKRTGMPVYNAIVWQCRRTAGYCDELREKGLDKTIKEKTGLMLDAYFSATKIKWILDNVEGARELAEKGDLLFGNIDTWLIWNMTKGKIHVTDYTNASRTMLFNIHELKWDEELLEILDIPKSMLPEVKPSSCVYGETDEILFGVSIPISGDAGDQQAALFGQTCFNAGMAKNTYGTGCFLLMNTGEKAVDSKNGLLTTIAVGIDGKVEYALEGSIFIGGAVIQWLRDELRMVKTAQETEKYATEVEDNNGVYLVPAFVGIGAPYWDSYARGTILGLTRGAKKEHIIRAALESMAYQTHDVLKAMEEDSGIELKALKVDGGACQNNFLMQFQSDILGVEVDRPEVVETTALGAAYLAGLAVGYWKDRNEISQNWAISRSFAPAMEDEKKEKLIKGWHKAVTKAMDWEEKE</sequence>
<proteinExistence type="inferred from homology"/>
<evidence type="ECO:0000255" key="1">
    <source>
        <dbReference type="HAMAP-Rule" id="MF_00186"/>
    </source>
</evidence>